<gene>
    <name type="primary">Chrna2</name>
    <name type="synonym">Acra2</name>
</gene>
<evidence type="ECO:0000250" key="1">
    <source>
        <dbReference type="UniProtKB" id="P02709"/>
    </source>
</evidence>
<evidence type="ECO:0000250" key="2">
    <source>
        <dbReference type="UniProtKB" id="P43681"/>
    </source>
</evidence>
<evidence type="ECO:0000250" key="3">
    <source>
        <dbReference type="UniProtKB" id="Q15822"/>
    </source>
</evidence>
<evidence type="ECO:0000255" key="4"/>
<evidence type="ECO:0000269" key="5">
    <source>
    </source>
</evidence>
<evidence type="ECO:0000305" key="6"/>
<name>ACHA2_RAT</name>
<feature type="signal peptide" evidence="4">
    <location>
        <begin position="1"/>
        <end position="27"/>
    </location>
</feature>
<feature type="chain" id="PRO_0000000343" description="Neuronal acetylcholine receptor subunit alpha-2">
    <location>
        <begin position="28"/>
        <end position="511"/>
    </location>
</feature>
<feature type="topological domain" description="Extracellular" evidence="4">
    <location>
        <begin position="28"/>
        <end position="241"/>
    </location>
</feature>
<feature type="transmembrane region" description="Helical" evidence="4">
    <location>
        <begin position="242"/>
        <end position="266"/>
    </location>
</feature>
<feature type="transmembrane region" description="Helical" evidence="4">
    <location>
        <begin position="274"/>
        <end position="292"/>
    </location>
</feature>
<feature type="transmembrane region" description="Helical" evidence="4">
    <location>
        <begin position="308"/>
        <end position="329"/>
    </location>
</feature>
<feature type="topological domain" description="Cytoplasmic" evidence="4">
    <location>
        <begin position="330"/>
        <end position="484"/>
    </location>
</feature>
<feature type="transmembrane region" description="Helical" evidence="4">
    <location>
        <begin position="485"/>
        <end position="503"/>
    </location>
</feature>
<feature type="glycosylation site" description="N-linked (GlcNAc...) asparagine" evidence="4">
    <location>
        <position position="56"/>
    </location>
</feature>
<feature type="glycosylation site" description="N-linked (GlcNAc...) asparagine" evidence="4">
    <location>
        <position position="106"/>
    </location>
</feature>
<feature type="glycosylation site" description="N-linked (GlcNAc...) asparagine" evidence="4">
    <location>
        <position position="212"/>
    </location>
</feature>
<feature type="disulfide bond" evidence="3">
    <location>
        <begin position="160"/>
        <end position="174"/>
    </location>
</feature>
<feature type="disulfide bond" description="Associated with receptor activation" evidence="3">
    <location>
        <begin position="224"/>
        <end position="225"/>
    </location>
</feature>
<feature type="sequence conflict" description="In Ref. 1; AAA40664." evidence="6" ref="1">
    <original>C</original>
    <variation>S</variation>
    <location>
        <position position="494"/>
    </location>
</feature>
<protein>
    <recommendedName>
        <fullName>Neuronal acetylcholine receptor subunit alpha-2</fullName>
    </recommendedName>
</protein>
<organism>
    <name type="scientific">Rattus norvegicus</name>
    <name type="common">Rat</name>
    <dbReference type="NCBI Taxonomy" id="10116"/>
    <lineage>
        <taxon>Eukaryota</taxon>
        <taxon>Metazoa</taxon>
        <taxon>Chordata</taxon>
        <taxon>Craniata</taxon>
        <taxon>Vertebrata</taxon>
        <taxon>Euteleostomi</taxon>
        <taxon>Mammalia</taxon>
        <taxon>Eutheria</taxon>
        <taxon>Euarchontoglires</taxon>
        <taxon>Glires</taxon>
        <taxon>Rodentia</taxon>
        <taxon>Myomorpha</taxon>
        <taxon>Muroidea</taxon>
        <taxon>Muridae</taxon>
        <taxon>Murinae</taxon>
        <taxon>Rattus</taxon>
    </lineage>
</organism>
<accession>P12389</accession>
<accession>O08952</accession>
<accession>Q53YK3</accession>
<proteinExistence type="evidence at protein level"/>
<comment type="function">
    <text evidence="3">Component of neuronal acetylcholine receptors (nAChRs) that function as pentameric, ligand-gated cation channels with high calcium permeability among other activities. nAChRs are excitatory neurotrasnmitter receptors formed by a collection of nAChR subunits known to mediate synaptic transmission in the nervous system and the neuromuscular junction. Each nAchR subunit confers differential attributes to channel properties, including activation, deactivation and desensitization kinetics, pH sensitivity, cation permeability, and binding to allosteric modulators. CHRNA2 forms heteropentameric neuronal acetylcholine receptors with CHRNB2 and CHRNB4 and plays a role in nicotine dependence.</text>
</comment>
<comment type="catalytic activity">
    <reaction evidence="2">
        <text>Ca(2+)(in) = Ca(2+)(out)</text>
        <dbReference type="Rhea" id="RHEA:29671"/>
        <dbReference type="ChEBI" id="CHEBI:29108"/>
    </reaction>
</comment>
<comment type="catalytic activity">
    <reaction evidence="1">
        <text>K(+)(in) = K(+)(out)</text>
        <dbReference type="Rhea" id="RHEA:29463"/>
        <dbReference type="ChEBI" id="CHEBI:29103"/>
    </reaction>
</comment>
<comment type="catalytic activity">
    <reaction evidence="2">
        <text>Na(+)(in) = Na(+)(out)</text>
        <dbReference type="Rhea" id="RHEA:34963"/>
        <dbReference type="ChEBI" id="CHEBI:29101"/>
    </reaction>
</comment>
<comment type="subunit">
    <text evidence="5">Neuronal AChR seems to be composed of two different types of subunits: alpha and non-alpha (beta). CHRNA2/Alpha-2 subunit can be combined to CHRNB2/beta-2 or CHRNB4/beta-4 to give rise to functional receptors. The alpha-2:beta-2 nAChR complex is proposed to be a heteropentamer with two subtypes: LS (low agonist sensitivity) with a (alpha-2)3:(beta-2)2 and HS (high agonist sensitivity) with a (alpha-2)2:(beta-2)3 stoichiometry; the subtypes differ in their subunit binding interfaces which are involved in ligand binding.</text>
</comment>
<comment type="subcellular location">
    <subcellularLocation>
        <location evidence="3">Synaptic cell membrane</location>
        <topology evidence="4">Multi-pass membrane protein</topology>
    </subcellularLocation>
    <subcellularLocation>
        <location evidence="3">Cell membrane</location>
        <topology evidence="4">Multi-pass membrane protein</topology>
    </subcellularLocation>
</comment>
<comment type="similarity">
    <text evidence="6">Belongs to the ligand-gated ion channel (TC 1.A.9) family. Acetylcholine receptor (TC 1.A.9.1) subfamily. Alpha-2/CHRNA2 sub-subfamily.</text>
</comment>
<sequence>MTLSHSALQFWTHLYLWCLLLVPAVLTQQGSHTHAEDRLFKHLFGGYNRWARPVPNTSDVVIVRFGLSIAQLIDVDEKNQMMTTNVWLKQEWNDYKLRWDPAEFGNVTSLRVPSEMIWIPDIVLYNNADGEFAVTHMTKAHLFFTGTVHWVPPAIYKSSCSIDVTFFPFDQQNCKMKFGSWTYDKAKIDLEQMERTVDLKDYWESGEWAIINATGTYNSKKYDCCAEIYPDVTYYFVIRRLPLFYTINLIIPCLLISCLTVLVFYLPSECGEKITLCISVLLSLTVFLLLITEIIPSTSLVIPLIGEYLLFTMIFVTLSIVITVFVLNVHHRSPSTHNMPNWVRVALLGRVPRWLMMNRPLPPMELHGSPDLKLSPSYHWLETNMDAGEREETEEEEEEEDENICVCAGLPDSSMGVLYGHGGLHLRAMEPETKTPSQASEILLSPQIQKALEGVHYIADRLRSEDADSSVKEDWKYVAMVVDRIFLWLFIIVCFLGTIGLFLPPFLAGMI</sequence>
<reference key="1">
    <citation type="journal article" date="1988" name="Science">
        <title>Functional expression of a new pharmacological subtype of brain nicotinic acetylcholine receptor.</title>
        <authorList>
            <person name="Wada K."/>
            <person name="Ballivet M."/>
            <person name="Boulter J."/>
            <person name="Connolly J.G."/>
            <person name="Wada E."/>
            <person name="Deneris E.S."/>
            <person name="Swanson L.W."/>
            <person name="Heinemann S.F."/>
            <person name="Patrick J."/>
        </authorList>
    </citation>
    <scope>NUCLEOTIDE SEQUENCE [GENOMIC DNA / MRNA]</scope>
    <scope>SUBUNIT</scope>
    <scope>FUNCTION</scope>
    <source>
        <strain>Sprague-Dawley</strain>
        <tissue>Brain</tissue>
    </source>
</reference>
<reference key="2">
    <citation type="submission" date="1997-06" db="EMBL/GenBank/DDBJ databases">
        <authorList>
            <person name="Boulter J."/>
        </authorList>
    </citation>
    <scope>SEQUENCE REVISION</scope>
</reference>
<reference key="3">
    <citation type="submission" date="2004-03" db="EMBL/GenBank/DDBJ databases">
        <authorList>
            <person name="Groot-Kormelink P.J."/>
        </authorList>
    </citation>
    <scope>NUCLEOTIDE SEQUENCE [MRNA]</scope>
    <source>
        <strain>Sprague-Dawley</strain>
        <tissue>Brain</tissue>
    </source>
</reference>
<dbReference type="EMBL" id="L10077">
    <property type="protein sequence ID" value="AAB60900.1"/>
    <property type="molecule type" value="mRNA"/>
</dbReference>
<dbReference type="EMBL" id="M20297">
    <property type="protein sequence ID" value="AAA40664.1"/>
    <property type="molecule type" value="Genomic_DNA"/>
</dbReference>
<dbReference type="EMBL" id="M20292">
    <property type="protein sequence ID" value="AAA40664.1"/>
    <property type="status" value="JOINED"/>
    <property type="molecule type" value="Genomic_DNA"/>
</dbReference>
<dbReference type="EMBL" id="M20293">
    <property type="protein sequence ID" value="AAA40664.1"/>
    <property type="status" value="JOINED"/>
    <property type="molecule type" value="Genomic_DNA"/>
</dbReference>
<dbReference type="EMBL" id="M20294">
    <property type="protein sequence ID" value="AAA40664.1"/>
    <property type="status" value="JOINED"/>
    <property type="molecule type" value="Genomic_DNA"/>
</dbReference>
<dbReference type="EMBL" id="M20295">
    <property type="protein sequence ID" value="AAA40664.1"/>
    <property type="status" value="JOINED"/>
    <property type="molecule type" value="Genomic_DNA"/>
</dbReference>
<dbReference type="EMBL" id="M20296">
    <property type="protein sequence ID" value="AAA40664.1"/>
    <property type="status" value="JOINED"/>
    <property type="molecule type" value="Genomic_DNA"/>
</dbReference>
<dbReference type="EMBL" id="AY574253">
    <property type="protein sequence ID" value="AAS90349.1"/>
    <property type="molecule type" value="mRNA"/>
</dbReference>
<dbReference type="PIR" id="A40110">
    <property type="entry name" value="A40110"/>
</dbReference>
<dbReference type="RefSeq" id="NP_596911.1">
    <property type="nucleotide sequence ID" value="NM_133420.1"/>
</dbReference>
<dbReference type="SMR" id="P12389"/>
<dbReference type="ComplexPortal" id="CPX-178">
    <property type="entry name" value="Neuronal nicotinic acetylcholine receptor complex, alpha2-beta2"/>
</dbReference>
<dbReference type="ComplexPortal" id="CPX-183">
    <property type="entry name" value="Neuronal nicotinic acetylcholine receptor complex, alpha2-beta4"/>
</dbReference>
<dbReference type="FunCoup" id="P12389">
    <property type="interactions" value="30"/>
</dbReference>
<dbReference type="STRING" id="10116.ENSRNOP00000023475"/>
<dbReference type="BindingDB" id="P12389"/>
<dbReference type="ChEMBL" id="CHEMBL2584"/>
<dbReference type="DrugCentral" id="P12389"/>
<dbReference type="GuidetoPHARMACOLOGY" id="463"/>
<dbReference type="GlyCosmos" id="P12389">
    <property type="glycosylation" value="3 sites, No reported glycans"/>
</dbReference>
<dbReference type="GlyGen" id="P12389">
    <property type="glycosylation" value="3 sites"/>
</dbReference>
<dbReference type="PhosphoSitePlus" id="P12389"/>
<dbReference type="PaxDb" id="10116-ENSRNOP00000023475"/>
<dbReference type="Ensembl" id="ENSRNOT00000023475.3">
    <property type="protein sequence ID" value="ENSRNOP00000023475.2"/>
    <property type="gene ID" value="ENSRNOG00000017424.3"/>
</dbReference>
<dbReference type="GeneID" id="170945"/>
<dbReference type="KEGG" id="rno:170945"/>
<dbReference type="UCSC" id="RGD:621533">
    <property type="organism name" value="rat"/>
</dbReference>
<dbReference type="AGR" id="RGD:621533"/>
<dbReference type="CTD" id="1135"/>
<dbReference type="RGD" id="621533">
    <property type="gene designation" value="Chrna2"/>
</dbReference>
<dbReference type="eggNOG" id="KOG3645">
    <property type="taxonomic scope" value="Eukaryota"/>
</dbReference>
<dbReference type="GeneTree" id="ENSGT00940000158299"/>
<dbReference type="HOGENOM" id="CLU_018074_1_0_1"/>
<dbReference type="InParanoid" id="P12389"/>
<dbReference type="OMA" id="SSYHWLE"/>
<dbReference type="OrthoDB" id="5975154at2759"/>
<dbReference type="PhylomeDB" id="P12389"/>
<dbReference type="TreeFam" id="TF315605"/>
<dbReference type="Reactome" id="R-RNO-629594">
    <property type="pathway name" value="Highly calcium permeable postsynaptic nicotinic acetylcholine receptors"/>
</dbReference>
<dbReference type="Reactome" id="R-RNO-629597">
    <property type="pathway name" value="Highly calcium permeable nicotinic acetylcholine receptors"/>
</dbReference>
<dbReference type="PRO" id="PR:P12389"/>
<dbReference type="Proteomes" id="UP000002494">
    <property type="component" value="Chromosome 15"/>
</dbReference>
<dbReference type="Bgee" id="ENSRNOG00000017424">
    <property type="expression patterns" value="Expressed in adult mammalian kidney and 11 other cell types or tissues"/>
</dbReference>
<dbReference type="GO" id="GO:0005892">
    <property type="term" value="C:acetylcholine-gated channel complex"/>
    <property type="evidence" value="ECO:0000266"/>
    <property type="project" value="RGD"/>
</dbReference>
<dbReference type="GO" id="GO:0034703">
    <property type="term" value="C:cation channel complex"/>
    <property type="evidence" value="ECO:0007669"/>
    <property type="project" value="Ensembl"/>
</dbReference>
<dbReference type="GO" id="GO:0071944">
    <property type="term" value="C:cell periphery"/>
    <property type="evidence" value="ECO:0000266"/>
    <property type="project" value="RGD"/>
</dbReference>
<dbReference type="GO" id="GO:0045171">
    <property type="term" value="C:intercellular bridge"/>
    <property type="evidence" value="ECO:0007669"/>
    <property type="project" value="Ensembl"/>
</dbReference>
<dbReference type="GO" id="GO:0043005">
    <property type="term" value="C:neuron projection"/>
    <property type="evidence" value="ECO:0000318"/>
    <property type="project" value="GO_Central"/>
</dbReference>
<dbReference type="GO" id="GO:0120111">
    <property type="term" value="C:neuron projection cytoplasm"/>
    <property type="evidence" value="ECO:0000314"/>
    <property type="project" value="RGD"/>
</dbReference>
<dbReference type="GO" id="GO:0098878">
    <property type="term" value="C:neurotransmitter receptor complex"/>
    <property type="evidence" value="ECO:0007669"/>
    <property type="project" value="Ensembl"/>
</dbReference>
<dbReference type="GO" id="GO:0005654">
    <property type="term" value="C:nucleoplasm"/>
    <property type="evidence" value="ECO:0007669"/>
    <property type="project" value="Ensembl"/>
</dbReference>
<dbReference type="GO" id="GO:0005886">
    <property type="term" value="C:plasma membrane"/>
    <property type="evidence" value="ECO:0000318"/>
    <property type="project" value="GO_Central"/>
</dbReference>
<dbReference type="GO" id="GO:0045211">
    <property type="term" value="C:postsynaptic membrane"/>
    <property type="evidence" value="ECO:0007669"/>
    <property type="project" value="UniProtKB-KW"/>
</dbReference>
<dbReference type="GO" id="GO:0032991">
    <property type="term" value="C:protein-containing complex"/>
    <property type="evidence" value="ECO:0000314"/>
    <property type="project" value="RGD"/>
</dbReference>
<dbReference type="GO" id="GO:0045202">
    <property type="term" value="C:synapse"/>
    <property type="evidence" value="ECO:0000318"/>
    <property type="project" value="GO_Central"/>
</dbReference>
<dbReference type="GO" id="GO:0015464">
    <property type="term" value="F:acetylcholine receptor activity"/>
    <property type="evidence" value="ECO:0000266"/>
    <property type="project" value="RGD"/>
</dbReference>
<dbReference type="GO" id="GO:0022848">
    <property type="term" value="F:acetylcholine-gated monoatomic cation-selective channel activity"/>
    <property type="evidence" value="ECO:0000314"/>
    <property type="project" value="RGD"/>
</dbReference>
<dbReference type="GO" id="GO:1901363">
    <property type="term" value="F:heterocyclic compound binding"/>
    <property type="evidence" value="ECO:0000314"/>
    <property type="project" value="RGD"/>
</dbReference>
<dbReference type="GO" id="GO:0050997">
    <property type="term" value="F:quaternary ammonium group binding"/>
    <property type="evidence" value="ECO:0000314"/>
    <property type="project" value="RGD"/>
</dbReference>
<dbReference type="GO" id="GO:0095500">
    <property type="term" value="P:acetylcholine receptor signaling pathway"/>
    <property type="evidence" value="ECO:0000318"/>
    <property type="project" value="GO_Central"/>
</dbReference>
<dbReference type="GO" id="GO:0071316">
    <property type="term" value="P:cellular response to nicotine"/>
    <property type="evidence" value="ECO:0000314"/>
    <property type="project" value="RGD"/>
</dbReference>
<dbReference type="GO" id="GO:0051899">
    <property type="term" value="P:membrane depolarization"/>
    <property type="evidence" value="ECO:0000318"/>
    <property type="project" value="GO_Central"/>
</dbReference>
<dbReference type="GO" id="GO:0098828">
    <property type="term" value="P:modulation of inhibitory postsynaptic potential"/>
    <property type="evidence" value="ECO:0000314"/>
    <property type="project" value="RGD"/>
</dbReference>
<dbReference type="GO" id="GO:0034220">
    <property type="term" value="P:monoatomic ion transmembrane transport"/>
    <property type="evidence" value="ECO:0000318"/>
    <property type="project" value="GO_Central"/>
</dbReference>
<dbReference type="GO" id="GO:0007274">
    <property type="term" value="P:neuromuscular synaptic transmission"/>
    <property type="evidence" value="ECO:0000318"/>
    <property type="project" value="GO_Central"/>
</dbReference>
<dbReference type="GO" id="GO:1905144">
    <property type="term" value="P:response to acetylcholine"/>
    <property type="evidence" value="ECO:0000314"/>
    <property type="project" value="RGD"/>
</dbReference>
<dbReference type="GO" id="GO:0035094">
    <property type="term" value="P:response to nicotine"/>
    <property type="evidence" value="ECO:0000318"/>
    <property type="project" value="GO_Central"/>
</dbReference>
<dbReference type="GO" id="GO:0007165">
    <property type="term" value="P:signal transduction"/>
    <property type="evidence" value="ECO:0000266"/>
    <property type="project" value="RGD"/>
</dbReference>
<dbReference type="GO" id="GO:0007271">
    <property type="term" value="P:synaptic transmission, cholinergic"/>
    <property type="evidence" value="ECO:0000318"/>
    <property type="project" value="GO_Central"/>
</dbReference>
<dbReference type="CDD" id="cd19015">
    <property type="entry name" value="LGIC_ECD_nAChR_A2"/>
    <property type="match status" value="1"/>
</dbReference>
<dbReference type="CDD" id="cd19064">
    <property type="entry name" value="LGIC_TM_nAChR"/>
    <property type="match status" value="1"/>
</dbReference>
<dbReference type="FunFam" id="1.20.58.390:FF:000014">
    <property type="entry name" value="Neuronal nicotinic acetylcholine receptor alpha4 subunit"/>
    <property type="match status" value="1"/>
</dbReference>
<dbReference type="FunFam" id="2.70.170.10:FF:000005">
    <property type="entry name" value="Neuronal nicotinic acetylcholine receptor alpha4 subunit"/>
    <property type="match status" value="1"/>
</dbReference>
<dbReference type="FunFam" id="1.20.58.390:FF:000001">
    <property type="entry name" value="Neuronal nicotinic acetylcholine receptor subunit 3"/>
    <property type="match status" value="1"/>
</dbReference>
<dbReference type="Gene3D" id="2.70.170.10">
    <property type="entry name" value="Neurotransmitter-gated ion-channel ligand-binding domain"/>
    <property type="match status" value="1"/>
</dbReference>
<dbReference type="Gene3D" id="1.20.58.390">
    <property type="entry name" value="Neurotransmitter-gated ion-channel transmembrane domain"/>
    <property type="match status" value="2"/>
</dbReference>
<dbReference type="InterPro" id="IPR006202">
    <property type="entry name" value="Neur_chan_lig-bd"/>
</dbReference>
<dbReference type="InterPro" id="IPR036734">
    <property type="entry name" value="Neur_chan_lig-bd_sf"/>
</dbReference>
<dbReference type="InterPro" id="IPR006201">
    <property type="entry name" value="Neur_channel"/>
</dbReference>
<dbReference type="InterPro" id="IPR036719">
    <property type="entry name" value="Neuro-gated_channel_TM_sf"/>
</dbReference>
<dbReference type="InterPro" id="IPR038050">
    <property type="entry name" value="Neuro_actylchol_rec"/>
</dbReference>
<dbReference type="InterPro" id="IPR006029">
    <property type="entry name" value="Neurotrans-gated_channel_TM"/>
</dbReference>
<dbReference type="InterPro" id="IPR018000">
    <property type="entry name" value="Neurotransmitter_ion_chnl_CS"/>
</dbReference>
<dbReference type="InterPro" id="IPR002394">
    <property type="entry name" value="Nicotinic_acetylcholine_rcpt"/>
</dbReference>
<dbReference type="NCBIfam" id="TIGR00860">
    <property type="entry name" value="LIC"/>
    <property type="match status" value="1"/>
</dbReference>
<dbReference type="PANTHER" id="PTHR18945">
    <property type="entry name" value="NEUROTRANSMITTER GATED ION CHANNEL"/>
    <property type="match status" value="1"/>
</dbReference>
<dbReference type="Pfam" id="PF02931">
    <property type="entry name" value="Neur_chan_LBD"/>
    <property type="match status" value="1"/>
</dbReference>
<dbReference type="Pfam" id="PF02932">
    <property type="entry name" value="Neur_chan_memb"/>
    <property type="match status" value="1"/>
</dbReference>
<dbReference type="PRINTS" id="PR00254">
    <property type="entry name" value="NICOTINICR"/>
</dbReference>
<dbReference type="PRINTS" id="PR00252">
    <property type="entry name" value="NRIONCHANNEL"/>
</dbReference>
<dbReference type="SUPFAM" id="SSF90112">
    <property type="entry name" value="Neurotransmitter-gated ion-channel transmembrane pore"/>
    <property type="match status" value="1"/>
</dbReference>
<dbReference type="SUPFAM" id="SSF63712">
    <property type="entry name" value="Nicotinic receptor ligand binding domain-like"/>
    <property type="match status" value="1"/>
</dbReference>
<dbReference type="PROSITE" id="PS00236">
    <property type="entry name" value="NEUROTR_ION_CHANNEL"/>
    <property type="match status" value="1"/>
</dbReference>
<keyword id="KW-1003">Cell membrane</keyword>
<keyword id="KW-1015">Disulfide bond</keyword>
<keyword id="KW-0325">Glycoprotein</keyword>
<keyword id="KW-0407">Ion channel</keyword>
<keyword id="KW-0406">Ion transport</keyword>
<keyword id="KW-1071">Ligand-gated ion channel</keyword>
<keyword id="KW-0472">Membrane</keyword>
<keyword id="KW-0675">Receptor</keyword>
<keyword id="KW-1185">Reference proteome</keyword>
<keyword id="KW-0732">Signal</keyword>
<keyword id="KW-0770">Synapse</keyword>
<keyword id="KW-0812">Transmembrane</keyword>
<keyword id="KW-1133">Transmembrane helix</keyword>
<keyword id="KW-0813">Transport</keyword>